<accession>B4HN85</accession>
<reference key="1">
    <citation type="journal article" date="2007" name="Nature">
        <title>Evolution of genes and genomes on the Drosophila phylogeny.</title>
        <authorList>
            <consortium name="Drosophila 12 genomes consortium"/>
        </authorList>
    </citation>
    <scope>NUCLEOTIDE SEQUENCE [LARGE SCALE GENOMIC DNA]</scope>
    <source>
        <strain>Rob3c / Tucson 14021-0248.25</strain>
    </source>
</reference>
<feature type="chain" id="PRO_0000370401" description="Ribosome biogenesis protein BOP1 homolog">
    <location>
        <begin position="1"/>
        <end position="784"/>
    </location>
</feature>
<feature type="repeat" description="WD 1">
    <location>
        <begin position="445"/>
        <end position="486"/>
    </location>
</feature>
<feature type="repeat" description="WD 2">
    <location>
        <begin position="488"/>
        <end position="526"/>
    </location>
</feature>
<feature type="repeat" description="WD 3">
    <location>
        <begin position="570"/>
        <end position="612"/>
    </location>
</feature>
<feature type="repeat" description="WD 4">
    <location>
        <begin position="615"/>
        <end position="653"/>
    </location>
</feature>
<feature type="repeat" description="WD 5">
    <location>
        <begin position="656"/>
        <end position="695"/>
    </location>
</feature>
<feature type="repeat" description="WD 6">
    <location>
        <begin position="699"/>
        <end position="738"/>
    </location>
</feature>
<feature type="repeat" description="WD 7">
    <location>
        <begin position="754"/>
        <end position="784"/>
    </location>
</feature>
<feature type="region of interest" description="Disordered" evidence="2">
    <location>
        <begin position="1"/>
        <end position="159"/>
    </location>
</feature>
<feature type="compositionally biased region" description="Basic residues" evidence="2">
    <location>
        <begin position="1"/>
        <end position="11"/>
    </location>
</feature>
<feature type="compositionally biased region" description="Acidic residues" evidence="2">
    <location>
        <begin position="27"/>
        <end position="36"/>
    </location>
</feature>
<feature type="compositionally biased region" description="Acidic residues" evidence="2">
    <location>
        <begin position="45"/>
        <end position="54"/>
    </location>
</feature>
<feature type="compositionally biased region" description="Acidic residues" evidence="2">
    <location>
        <begin position="62"/>
        <end position="73"/>
    </location>
</feature>
<feature type="compositionally biased region" description="Acidic residues" evidence="2">
    <location>
        <begin position="84"/>
        <end position="111"/>
    </location>
</feature>
<feature type="compositionally biased region" description="Basic and acidic residues" evidence="2">
    <location>
        <begin position="112"/>
        <end position="123"/>
    </location>
</feature>
<feature type="compositionally biased region" description="Basic and acidic residues" evidence="2">
    <location>
        <begin position="138"/>
        <end position="148"/>
    </location>
</feature>
<feature type="compositionally biased region" description="Acidic residues" evidence="2">
    <location>
        <begin position="149"/>
        <end position="158"/>
    </location>
</feature>
<dbReference type="EMBL" id="CH480816">
    <property type="protein sequence ID" value="EDW48367.1"/>
    <property type="molecule type" value="Genomic_DNA"/>
</dbReference>
<dbReference type="SMR" id="B4HN85"/>
<dbReference type="STRING" id="7238.B4HN85"/>
<dbReference type="EnsemblMetazoa" id="FBtr0204810">
    <property type="protein sequence ID" value="FBpp0203302"/>
    <property type="gene ID" value="FBgn0176702"/>
</dbReference>
<dbReference type="EnsemblMetazoa" id="XM_002034318.2">
    <property type="protein sequence ID" value="XP_002034354.1"/>
    <property type="gene ID" value="LOC6609697"/>
</dbReference>
<dbReference type="GeneID" id="6609697"/>
<dbReference type="KEGG" id="dse:6609697"/>
<dbReference type="HOGENOM" id="CLU_011390_2_0_1"/>
<dbReference type="OMA" id="MRPAKGE"/>
<dbReference type="OrthoDB" id="34687at7215"/>
<dbReference type="PhylomeDB" id="B4HN85"/>
<dbReference type="Proteomes" id="UP000001292">
    <property type="component" value="Unassembled WGS sequence"/>
</dbReference>
<dbReference type="GO" id="GO:0005654">
    <property type="term" value="C:nucleoplasm"/>
    <property type="evidence" value="ECO:0007669"/>
    <property type="project" value="UniProtKB-SubCell"/>
</dbReference>
<dbReference type="GO" id="GO:0070545">
    <property type="term" value="C:PeBoW complex"/>
    <property type="evidence" value="ECO:0007669"/>
    <property type="project" value="TreeGrafter"/>
</dbReference>
<dbReference type="GO" id="GO:0030687">
    <property type="term" value="C:preribosome, large subunit precursor"/>
    <property type="evidence" value="ECO:0007669"/>
    <property type="project" value="UniProtKB-UniRule"/>
</dbReference>
<dbReference type="GO" id="GO:0043021">
    <property type="term" value="F:ribonucleoprotein complex binding"/>
    <property type="evidence" value="ECO:0007669"/>
    <property type="project" value="UniProtKB-UniRule"/>
</dbReference>
<dbReference type="GO" id="GO:0000466">
    <property type="term" value="P:maturation of 5.8S rRNA from tricistronic rRNA transcript (SSU-rRNA, 5.8S rRNA, LSU-rRNA)"/>
    <property type="evidence" value="ECO:0007669"/>
    <property type="project" value="UniProtKB-UniRule"/>
</dbReference>
<dbReference type="GO" id="GO:0000463">
    <property type="term" value="P:maturation of LSU-rRNA from tricistronic rRNA transcript (SSU-rRNA, 5.8S rRNA, LSU-rRNA)"/>
    <property type="evidence" value="ECO:0007669"/>
    <property type="project" value="UniProtKB-UniRule"/>
</dbReference>
<dbReference type="GO" id="GO:0035206">
    <property type="term" value="P:regulation of hemocyte proliferation"/>
    <property type="evidence" value="ECO:0007669"/>
    <property type="project" value="EnsemblMetazoa"/>
</dbReference>
<dbReference type="CDD" id="cd00200">
    <property type="entry name" value="WD40"/>
    <property type="match status" value="1"/>
</dbReference>
<dbReference type="FunFam" id="2.130.10.10:FF:000061">
    <property type="entry name" value="Ribosome biogenesis protein BOP1 homolog"/>
    <property type="match status" value="1"/>
</dbReference>
<dbReference type="Gene3D" id="2.130.10.10">
    <property type="entry name" value="YVTN repeat-like/Quinoprotein amine dehydrogenase"/>
    <property type="match status" value="1"/>
</dbReference>
<dbReference type="HAMAP" id="MF_03027">
    <property type="entry name" value="BOP1"/>
    <property type="match status" value="1"/>
</dbReference>
<dbReference type="InterPro" id="IPR028598">
    <property type="entry name" value="BOP1/Erb1"/>
</dbReference>
<dbReference type="InterPro" id="IPR012953">
    <property type="entry name" value="BOP1_N_dom"/>
</dbReference>
<dbReference type="InterPro" id="IPR015943">
    <property type="entry name" value="WD40/YVTN_repeat-like_dom_sf"/>
</dbReference>
<dbReference type="InterPro" id="IPR019775">
    <property type="entry name" value="WD40_repeat_CS"/>
</dbReference>
<dbReference type="InterPro" id="IPR036322">
    <property type="entry name" value="WD40_repeat_dom_sf"/>
</dbReference>
<dbReference type="InterPro" id="IPR001680">
    <property type="entry name" value="WD40_rpt"/>
</dbReference>
<dbReference type="PANTHER" id="PTHR17605:SF0">
    <property type="entry name" value="RIBOSOME BIOGENESIS PROTEIN BOP1"/>
    <property type="match status" value="1"/>
</dbReference>
<dbReference type="PANTHER" id="PTHR17605">
    <property type="entry name" value="RIBOSOME BIOGENESIS PROTEIN BOP1 BLOCK OF PROLIFERATION 1 PROTEIN"/>
    <property type="match status" value="1"/>
</dbReference>
<dbReference type="Pfam" id="PF08145">
    <property type="entry name" value="BOP1NT"/>
    <property type="match status" value="1"/>
</dbReference>
<dbReference type="Pfam" id="PF00400">
    <property type="entry name" value="WD40"/>
    <property type="match status" value="3"/>
</dbReference>
<dbReference type="SMART" id="SM01035">
    <property type="entry name" value="BOP1NT"/>
    <property type="match status" value="1"/>
</dbReference>
<dbReference type="SMART" id="SM00320">
    <property type="entry name" value="WD40"/>
    <property type="match status" value="7"/>
</dbReference>
<dbReference type="SUPFAM" id="SSF50978">
    <property type="entry name" value="WD40 repeat-like"/>
    <property type="match status" value="1"/>
</dbReference>
<dbReference type="PROSITE" id="PS00678">
    <property type="entry name" value="WD_REPEATS_1"/>
    <property type="match status" value="1"/>
</dbReference>
<dbReference type="PROSITE" id="PS50082">
    <property type="entry name" value="WD_REPEATS_2"/>
    <property type="match status" value="1"/>
</dbReference>
<dbReference type="PROSITE" id="PS50294">
    <property type="entry name" value="WD_REPEATS_REGION"/>
    <property type="match status" value="2"/>
</dbReference>
<keyword id="KW-0539">Nucleus</keyword>
<keyword id="KW-1185">Reference proteome</keyword>
<keyword id="KW-0677">Repeat</keyword>
<keyword id="KW-0690">Ribosome biogenesis</keyword>
<keyword id="KW-0698">rRNA processing</keyword>
<keyword id="KW-0853">WD repeat</keyword>
<gene>
    <name type="ORF">GM21825</name>
</gene>
<proteinExistence type="inferred from homology"/>
<sequence length="784" mass="90457">MTKKLALKRRGKDSEPTNEVVASSEASENEEEEEDLLQAVKDPGEDSTDDEGIDQEYHSDSSEELQFESDEEGNYLGRKQSSSAEEDEESSDEEDNEEEGSTDEEEVEDEEKVSKSKQSDDKPSGSGAASKKALTAELPKRDSSKPEYQDSDTSDEEDIRNTVGNIPMHWYDEYKHIGYDWDAKKIIKPPQGDQIDEFLRKIEDPDFWRTVKDPLTGQDVRLTDEDIALIKRIVSGRIPNKDHEEYEPWIEWFTSEVEKMPIKNVPDHKRSFLPSVSEKKRVSRMVHALKMGWMKTTEEVEREKQAKRGPKFYMLWETDTSREHMRRIHDPVSAPKRDLPGHAESYNPPPEYLFDAKETKEWLKLKDEPHKRKLHFMPQKFKSLREVPAYSRYLRERFLRCLDLYLCPRAKRVKLNIDAEYLIPKLPSPRDLQPFPTVESMVYRGHTDLVRSVSVEPKGEYLVSGSDDKTVKIWEIATGRCIRTIETDEVVRCVAWCPNPKLSIIAVATGNRLLLVNPKVGDKVLVQKTDDLLAEAPSQDVIESERIKTAVQWSNAEADEQEKGVRVVITHFKPIRQVTWHGRGDYLATVMPEGANRSALIHQLSKRRSQIPFSKSKGLIQFVLFHPVKPCFFVATQHNIRIYDLVKQELVKKLLTNSKWISGMSIHPKGDNLLVSTYDKKMLWFDLDLSTKPYQTMRLHRNAVRSVAFHRRYPLFASGSDDQAVIVSHGMVYNDLLQNPLIVPLKKLQTHEKRDEFGVLDVNWHPVQPWVFSTGADSTIRLYT</sequence>
<comment type="function">
    <text evidence="1">Required for maturation of ribosomal RNAs and formation of the large ribosomal subunit.</text>
</comment>
<comment type="subcellular location">
    <subcellularLocation>
        <location evidence="1">Nucleus</location>
        <location evidence="1">Nucleolus</location>
    </subcellularLocation>
    <subcellularLocation>
        <location evidence="1">Nucleus</location>
        <location evidence="1">Nucleoplasm</location>
    </subcellularLocation>
</comment>
<comment type="similarity">
    <text evidence="1">Belongs to the WD repeat BOP1/ERB1 family.</text>
</comment>
<protein>
    <recommendedName>
        <fullName evidence="1">Ribosome biogenesis protein BOP1 homolog</fullName>
    </recommendedName>
</protein>
<name>BOP1_DROSE</name>
<evidence type="ECO:0000255" key="1">
    <source>
        <dbReference type="HAMAP-Rule" id="MF_03027"/>
    </source>
</evidence>
<evidence type="ECO:0000256" key="2">
    <source>
        <dbReference type="SAM" id="MobiDB-lite"/>
    </source>
</evidence>
<organism>
    <name type="scientific">Drosophila sechellia</name>
    <name type="common">Fruit fly</name>
    <dbReference type="NCBI Taxonomy" id="7238"/>
    <lineage>
        <taxon>Eukaryota</taxon>
        <taxon>Metazoa</taxon>
        <taxon>Ecdysozoa</taxon>
        <taxon>Arthropoda</taxon>
        <taxon>Hexapoda</taxon>
        <taxon>Insecta</taxon>
        <taxon>Pterygota</taxon>
        <taxon>Neoptera</taxon>
        <taxon>Endopterygota</taxon>
        <taxon>Diptera</taxon>
        <taxon>Brachycera</taxon>
        <taxon>Muscomorpha</taxon>
        <taxon>Ephydroidea</taxon>
        <taxon>Drosophilidae</taxon>
        <taxon>Drosophila</taxon>
        <taxon>Sophophora</taxon>
    </lineage>
</organism>